<evidence type="ECO:0000250" key="1">
    <source>
        <dbReference type="UniProtKB" id="P0AD65"/>
    </source>
</evidence>
<evidence type="ECO:0000250" key="2">
    <source>
        <dbReference type="UniProtKB" id="P9WKD1"/>
    </source>
</evidence>
<evidence type="ECO:0000255" key="3"/>
<evidence type="ECO:0000305" key="4"/>
<organism>
    <name type="scientific">Mycobacterium tuberculosis (strain CDC 1551 / Oshkosh)</name>
    <dbReference type="NCBI Taxonomy" id="83331"/>
    <lineage>
        <taxon>Bacteria</taxon>
        <taxon>Bacillati</taxon>
        <taxon>Actinomycetota</taxon>
        <taxon>Actinomycetes</taxon>
        <taxon>Mycobacteriales</taxon>
        <taxon>Mycobacteriaceae</taxon>
        <taxon>Mycobacterium</taxon>
        <taxon>Mycobacterium tuberculosis complex</taxon>
    </lineage>
</organism>
<sequence>MNASLRRISVTVMALIVLLLLNATMTQVFTADGLRADPRNQRVLLDEYSRQRGQITAGGQLLAYSVATDGRFRFLRVYPNPEVYAPVTGFYSLRYSSTALERAEDPILNGSDRRLFGRRLADFFTGRDPRGGNVDTTINPRIQQAGWDAMQQGCYGPCKGAVVALEPSTGKILALVSSPSYDPNLLASHNPEVQAQAWQRLGDNPASPLTNRAISETYPPGSTFKVITTAAALAAGATETEQLTAAPTIPLPGSTAQLENYGGAPCGDEPTVSLREAFVKSCNTAFVQLGIRTGADALRSMARAFGLDSPPRPTPLQVAESTVGPIPDSAALGMTSIGQKDVALTPLANAEIAATIANGGITMRPYLVGSLKGPDLANISTTVGYQQRRAVSPQVAAKLTELMVGAEKVAQQKGAIPGVQIASKTGTAEHGTDPRHTPPHAWYIAFAPAQAPKVAVAVLVENGADRLSATGGALAAPIGRAVIEAALQGEP</sequence>
<keyword id="KW-0997">Cell inner membrane</keyword>
<keyword id="KW-1003">Cell membrane</keyword>
<keyword id="KW-0133">Cell shape</keyword>
<keyword id="KW-0961">Cell wall biogenesis/degradation</keyword>
<keyword id="KW-0378">Hydrolase</keyword>
<keyword id="KW-0472">Membrane</keyword>
<keyword id="KW-0573">Peptidoglycan synthesis</keyword>
<keyword id="KW-1185">Reference proteome</keyword>
<keyword id="KW-0735">Signal-anchor</keyword>
<keyword id="KW-0812">Transmembrane</keyword>
<keyword id="KW-1133">Transmembrane helix</keyword>
<proteinExistence type="inferred from homology"/>
<gene>
    <name type="primary">pbpA</name>
    <name type="ordered locus">MT0019</name>
</gene>
<dbReference type="EC" id="3.4.16.4" evidence="2"/>
<dbReference type="EMBL" id="AE000516">
    <property type="protein sequence ID" value="AAK44241.1"/>
    <property type="molecule type" value="Genomic_DNA"/>
</dbReference>
<dbReference type="PIR" id="F70699">
    <property type="entry name" value="F70699"/>
</dbReference>
<dbReference type="RefSeq" id="WP_003899775.1">
    <property type="nucleotide sequence ID" value="NZ_KK341227.1"/>
</dbReference>
<dbReference type="SMR" id="P9WKD0"/>
<dbReference type="GeneID" id="45423975"/>
<dbReference type="KEGG" id="mtc:MT0019"/>
<dbReference type="PATRIC" id="fig|83331.31.peg.20"/>
<dbReference type="HOGENOM" id="CLU_009289_1_0_11"/>
<dbReference type="UniPathway" id="UPA00219"/>
<dbReference type="Proteomes" id="UP000001020">
    <property type="component" value="Chromosome"/>
</dbReference>
<dbReference type="GO" id="GO:0005886">
    <property type="term" value="C:plasma membrane"/>
    <property type="evidence" value="ECO:0007669"/>
    <property type="project" value="UniProtKB-SubCell"/>
</dbReference>
<dbReference type="GO" id="GO:0008658">
    <property type="term" value="F:penicillin binding"/>
    <property type="evidence" value="ECO:0007669"/>
    <property type="project" value="InterPro"/>
</dbReference>
<dbReference type="GO" id="GO:0071972">
    <property type="term" value="F:peptidoglycan L,D-transpeptidase activity"/>
    <property type="evidence" value="ECO:0007669"/>
    <property type="project" value="TreeGrafter"/>
</dbReference>
<dbReference type="GO" id="GO:0009002">
    <property type="term" value="F:serine-type D-Ala-D-Ala carboxypeptidase activity"/>
    <property type="evidence" value="ECO:0007669"/>
    <property type="project" value="UniProtKB-EC"/>
</dbReference>
<dbReference type="GO" id="GO:0071555">
    <property type="term" value="P:cell wall organization"/>
    <property type="evidence" value="ECO:0007669"/>
    <property type="project" value="UniProtKB-KW"/>
</dbReference>
<dbReference type="GO" id="GO:0009252">
    <property type="term" value="P:peptidoglycan biosynthetic process"/>
    <property type="evidence" value="ECO:0007669"/>
    <property type="project" value="UniProtKB-UniPathway"/>
</dbReference>
<dbReference type="GO" id="GO:0008360">
    <property type="term" value="P:regulation of cell shape"/>
    <property type="evidence" value="ECO:0007669"/>
    <property type="project" value="UniProtKB-KW"/>
</dbReference>
<dbReference type="FunFam" id="3.40.710.10:FF:000022">
    <property type="entry name" value="Penicillin-binding protein A"/>
    <property type="match status" value="1"/>
</dbReference>
<dbReference type="Gene3D" id="3.40.710.10">
    <property type="entry name" value="DD-peptidase/beta-lactamase superfamily"/>
    <property type="match status" value="1"/>
</dbReference>
<dbReference type="Gene3D" id="3.90.1310.10">
    <property type="entry name" value="Penicillin-binding protein 2a (Domain 2)"/>
    <property type="match status" value="1"/>
</dbReference>
<dbReference type="InterPro" id="IPR050515">
    <property type="entry name" value="Bact_Transpept/Beta-Lactamase"/>
</dbReference>
<dbReference type="InterPro" id="IPR012338">
    <property type="entry name" value="Beta-lactam/transpept-like"/>
</dbReference>
<dbReference type="InterPro" id="IPR054120">
    <property type="entry name" value="PBPA_dimer"/>
</dbReference>
<dbReference type="InterPro" id="IPR001460">
    <property type="entry name" value="PCN-bd_Tpept"/>
</dbReference>
<dbReference type="PANTHER" id="PTHR30627:SF24">
    <property type="entry name" value="PENICILLIN-BINDING PROTEIN 4B"/>
    <property type="match status" value="1"/>
</dbReference>
<dbReference type="PANTHER" id="PTHR30627">
    <property type="entry name" value="PEPTIDOGLYCAN D,D-TRANSPEPTIDASE"/>
    <property type="match status" value="1"/>
</dbReference>
<dbReference type="Pfam" id="PF21922">
    <property type="entry name" value="PBP_dimer_2"/>
    <property type="match status" value="1"/>
</dbReference>
<dbReference type="Pfam" id="PF00905">
    <property type="entry name" value="Transpeptidase"/>
    <property type="match status" value="1"/>
</dbReference>
<dbReference type="SUPFAM" id="SSF56601">
    <property type="entry name" value="beta-lactamase/transpeptidase-like"/>
    <property type="match status" value="1"/>
</dbReference>
<comment type="function">
    <text evidence="2">Transpeptidase that catalyzes cross-linking of the peptidoglycan cell wall. Required for the regulation of cell length.</text>
</comment>
<comment type="catalytic activity">
    <reaction evidence="2">
        <text>Preferential cleavage: (Ac)2-L-Lys-D-Ala-|-D-Ala. Also transpeptidation of peptidyl-alanyl moieties that are N-acyl substituents of D-alanine.</text>
        <dbReference type="EC" id="3.4.16.4"/>
    </reaction>
</comment>
<comment type="pathway">
    <text evidence="2">Cell wall biogenesis; peptidoglycan biosynthesis.</text>
</comment>
<comment type="subcellular location">
    <subcellularLocation>
        <location evidence="2">Cell inner membrane</location>
        <topology evidence="3">Single-pass type II membrane protein</topology>
    </subcellularLocation>
</comment>
<comment type="similarity">
    <text evidence="4">Belongs to the transpeptidase family.</text>
</comment>
<protein>
    <recommendedName>
        <fullName evidence="2">Peptidoglycan D,D-transpeptidase PbpA</fullName>
        <ecNumber evidence="2">3.4.16.4</ecNumber>
    </recommendedName>
    <alternativeName>
        <fullName evidence="2">Penicillin-binding protein A</fullName>
        <shortName evidence="2">PBPA</shortName>
    </alternativeName>
</protein>
<feature type="chain" id="PRO_0000427675" description="Peptidoglycan D,D-transpeptidase PbpA">
    <location>
        <begin position="1"/>
        <end position="491"/>
    </location>
</feature>
<feature type="topological domain" description="Cytoplasmic" evidence="4">
    <location>
        <begin position="1"/>
        <end position="7"/>
    </location>
</feature>
<feature type="transmembrane region" description="Helical; Signal-anchor for type II membrane protein" evidence="3">
    <location>
        <begin position="8"/>
        <end position="28"/>
    </location>
</feature>
<feature type="topological domain" description="Periplasmic" evidence="4">
    <location>
        <begin position="29"/>
        <end position="491"/>
    </location>
</feature>
<feature type="region of interest" description="Transpeptidase">
    <location>
        <begin position="160"/>
        <end position="484"/>
    </location>
</feature>
<feature type="active site" description="Acyl-ester intermediate" evidence="1">
    <location>
        <position position="222"/>
    </location>
</feature>
<name>PBPA_MYCTO</name>
<reference key="1">
    <citation type="journal article" date="2002" name="J. Bacteriol.">
        <title>Whole-genome comparison of Mycobacterium tuberculosis clinical and laboratory strains.</title>
        <authorList>
            <person name="Fleischmann R.D."/>
            <person name="Alland D."/>
            <person name="Eisen J.A."/>
            <person name="Carpenter L."/>
            <person name="White O."/>
            <person name="Peterson J.D."/>
            <person name="DeBoy R.T."/>
            <person name="Dodson R.J."/>
            <person name="Gwinn M.L."/>
            <person name="Haft D.H."/>
            <person name="Hickey E.K."/>
            <person name="Kolonay J.F."/>
            <person name="Nelson W.C."/>
            <person name="Umayam L.A."/>
            <person name="Ermolaeva M.D."/>
            <person name="Salzberg S.L."/>
            <person name="Delcher A."/>
            <person name="Utterback T.R."/>
            <person name="Weidman J.F."/>
            <person name="Khouri H.M."/>
            <person name="Gill J."/>
            <person name="Mikula A."/>
            <person name="Bishai W."/>
            <person name="Jacobs W.R. Jr."/>
            <person name="Venter J.C."/>
            <person name="Fraser C.M."/>
        </authorList>
    </citation>
    <scope>NUCLEOTIDE SEQUENCE [LARGE SCALE GENOMIC DNA]</scope>
    <source>
        <strain>CDC 1551 / Oshkosh</strain>
    </source>
</reference>
<accession>P9WKD0</accession>
<accession>L0T427</accession>
<accession>P71586</accession>
<accession>Q7DAK5</accession>